<feature type="chain" id="PRO_0000371080" description="ATP synthase subunit delta">
    <location>
        <begin position="1"/>
        <end position="178"/>
    </location>
</feature>
<reference key="1">
    <citation type="journal article" date="2005" name="Proc. Natl. Acad. Sci. U.S.A.">
        <title>Comparison of the complete genome sequences of Pseudomonas syringae pv. syringae B728a and pv. tomato DC3000.</title>
        <authorList>
            <person name="Feil H."/>
            <person name="Feil W.S."/>
            <person name="Chain P."/>
            <person name="Larimer F."/>
            <person name="Dibartolo G."/>
            <person name="Copeland A."/>
            <person name="Lykidis A."/>
            <person name="Trong S."/>
            <person name="Nolan M."/>
            <person name="Goltsman E."/>
            <person name="Thiel J."/>
            <person name="Malfatti S."/>
            <person name="Loper J.E."/>
            <person name="Lapidus A."/>
            <person name="Detter J.C."/>
            <person name="Land M."/>
            <person name="Richardson P.M."/>
            <person name="Kyrpides N.C."/>
            <person name="Ivanova N."/>
            <person name="Lindow S.E."/>
        </authorList>
    </citation>
    <scope>NUCLEOTIDE SEQUENCE [LARGE SCALE GENOMIC DNA]</scope>
    <source>
        <strain>B728a</strain>
    </source>
</reference>
<keyword id="KW-0066">ATP synthesis</keyword>
<keyword id="KW-0997">Cell inner membrane</keyword>
<keyword id="KW-1003">Cell membrane</keyword>
<keyword id="KW-0139">CF(1)</keyword>
<keyword id="KW-0375">Hydrogen ion transport</keyword>
<keyword id="KW-0406">Ion transport</keyword>
<keyword id="KW-0472">Membrane</keyword>
<keyword id="KW-0813">Transport</keyword>
<sequence>MAELTTLARPYAKAAFEHAQAHQQLANWSAMLGLAAAVSQDDTMQRMLKAPRLTSAQKATTFIEVCGEKFDAKAQNFIHVVAENDRLPLLPEIAELFDLYKAEQEKSVDVDVTSAFALNQEQQDKLAKVLSARLGREVRLHAAEDASLIGGVVIRAGDLVIDGSVRGKIAKLAEALKS</sequence>
<gene>
    <name evidence="1" type="primary">atpH</name>
    <name type="ordered locus">Psyr_5124</name>
</gene>
<protein>
    <recommendedName>
        <fullName evidence="1">ATP synthase subunit delta</fullName>
    </recommendedName>
    <alternativeName>
        <fullName evidence="1">ATP synthase F(1) sector subunit delta</fullName>
    </alternativeName>
    <alternativeName>
        <fullName evidence="1">F-type ATPase subunit delta</fullName>
        <shortName evidence="1">F-ATPase subunit delta</shortName>
    </alternativeName>
</protein>
<name>ATPD_PSEU2</name>
<comment type="function">
    <text evidence="1">F(1)F(0) ATP synthase produces ATP from ADP in the presence of a proton or sodium gradient. F-type ATPases consist of two structural domains, F(1) containing the extramembraneous catalytic core and F(0) containing the membrane proton channel, linked together by a central stalk and a peripheral stalk. During catalysis, ATP synthesis in the catalytic domain of F(1) is coupled via a rotary mechanism of the central stalk subunits to proton translocation.</text>
</comment>
<comment type="function">
    <text evidence="1">This protein is part of the stalk that links CF(0) to CF(1). It either transmits conformational changes from CF(0) to CF(1) or is implicated in proton conduction.</text>
</comment>
<comment type="subunit">
    <text evidence="1">F-type ATPases have 2 components, F(1) - the catalytic core - and F(0) - the membrane proton channel. F(1) has five subunits: alpha(3), beta(3), gamma(1), delta(1), epsilon(1). F(0) has three main subunits: a(1), b(2) and c(10-14). The alpha and beta chains form an alternating ring which encloses part of the gamma chain. F(1) is attached to F(0) by a central stalk formed by the gamma and epsilon chains, while a peripheral stalk is formed by the delta and b chains.</text>
</comment>
<comment type="subcellular location">
    <subcellularLocation>
        <location evidence="1">Cell inner membrane</location>
        <topology evidence="1">Peripheral membrane protein</topology>
    </subcellularLocation>
</comment>
<comment type="similarity">
    <text evidence="1">Belongs to the ATPase delta chain family.</text>
</comment>
<accession>Q4ZL21</accession>
<dbReference type="EMBL" id="CP000075">
    <property type="protein sequence ID" value="AAY40151.1"/>
    <property type="molecule type" value="Genomic_DNA"/>
</dbReference>
<dbReference type="RefSeq" id="WP_003315956.1">
    <property type="nucleotide sequence ID" value="NC_007005.1"/>
</dbReference>
<dbReference type="RefSeq" id="YP_238189.1">
    <property type="nucleotide sequence ID" value="NC_007005.1"/>
</dbReference>
<dbReference type="SMR" id="Q4ZL21"/>
<dbReference type="STRING" id="205918.Psyr_5124"/>
<dbReference type="KEGG" id="psb:Psyr_5124"/>
<dbReference type="PATRIC" id="fig|205918.7.peg.5285"/>
<dbReference type="eggNOG" id="COG0712">
    <property type="taxonomic scope" value="Bacteria"/>
</dbReference>
<dbReference type="HOGENOM" id="CLU_085114_3_0_6"/>
<dbReference type="OrthoDB" id="9816221at2"/>
<dbReference type="Proteomes" id="UP000000426">
    <property type="component" value="Chromosome"/>
</dbReference>
<dbReference type="GO" id="GO:0005886">
    <property type="term" value="C:plasma membrane"/>
    <property type="evidence" value="ECO:0007669"/>
    <property type="project" value="UniProtKB-SubCell"/>
</dbReference>
<dbReference type="GO" id="GO:0045259">
    <property type="term" value="C:proton-transporting ATP synthase complex"/>
    <property type="evidence" value="ECO:0007669"/>
    <property type="project" value="UniProtKB-KW"/>
</dbReference>
<dbReference type="GO" id="GO:0046933">
    <property type="term" value="F:proton-transporting ATP synthase activity, rotational mechanism"/>
    <property type="evidence" value="ECO:0007669"/>
    <property type="project" value="UniProtKB-UniRule"/>
</dbReference>
<dbReference type="Gene3D" id="1.10.520.20">
    <property type="entry name" value="N-terminal domain of the delta subunit of the F1F0-ATP synthase"/>
    <property type="match status" value="1"/>
</dbReference>
<dbReference type="HAMAP" id="MF_01416">
    <property type="entry name" value="ATP_synth_delta_bact"/>
    <property type="match status" value="1"/>
</dbReference>
<dbReference type="InterPro" id="IPR026015">
    <property type="entry name" value="ATP_synth_OSCP/delta_N_sf"/>
</dbReference>
<dbReference type="InterPro" id="IPR000711">
    <property type="entry name" value="ATPase_OSCP/dsu"/>
</dbReference>
<dbReference type="NCBIfam" id="TIGR01145">
    <property type="entry name" value="ATP_synt_delta"/>
    <property type="match status" value="1"/>
</dbReference>
<dbReference type="NCBIfam" id="NF004402">
    <property type="entry name" value="PRK05758.2-2"/>
    <property type="match status" value="1"/>
</dbReference>
<dbReference type="PANTHER" id="PTHR11910">
    <property type="entry name" value="ATP SYNTHASE DELTA CHAIN"/>
    <property type="match status" value="1"/>
</dbReference>
<dbReference type="Pfam" id="PF00213">
    <property type="entry name" value="OSCP"/>
    <property type="match status" value="1"/>
</dbReference>
<dbReference type="PRINTS" id="PR00125">
    <property type="entry name" value="ATPASEDELTA"/>
</dbReference>
<dbReference type="SUPFAM" id="SSF47928">
    <property type="entry name" value="N-terminal domain of the delta subunit of the F1F0-ATP synthase"/>
    <property type="match status" value="1"/>
</dbReference>
<proteinExistence type="inferred from homology"/>
<evidence type="ECO:0000255" key="1">
    <source>
        <dbReference type="HAMAP-Rule" id="MF_01416"/>
    </source>
</evidence>
<organism>
    <name type="scientific">Pseudomonas syringae pv. syringae (strain B728a)</name>
    <dbReference type="NCBI Taxonomy" id="205918"/>
    <lineage>
        <taxon>Bacteria</taxon>
        <taxon>Pseudomonadati</taxon>
        <taxon>Pseudomonadota</taxon>
        <taxon>Gammaproteobacteria</taxon>
        <taxon>Pseudomonadales</taxon>
        <taxon>Pseudomonadaceae</taxon>
        <taxon>Pseudomonas</taxon>
        <taxon>Pseudomonas syringae</taxon>
    </lineage>
</organism>